<keyword id="KW-0378">Hydrolase</keyword>
<keyword id="KW-0460">Magnesium</keyword>
<keyword id="KW-0479">Metal-binding</keyword>
<keyword id="KW-1185">Reference proteome</keyword>
<proteinExistence type="evidence at transcript level"/>
<organism>
    <name type="scientific">Xenopus tropicalis</name>
    <name type="common">Western clawed frog</name>
    <name type="synonym">Silurana tropicalis</name>
    <dbReference type="NCBI Taxonomy" id="8364"/>
    <lineage>
        <taxon>Eukaryota</taxon>
        <taxon>Metazoa</taxon>
        <taxon>Chordata</taxon>
        <taxon>Craniata</taxon>
        <taxon>Vertebrata</taxon>
        <taxon>Euteleostomi</taxon>
        <taxon>Amphibia</taxon>
        <taxon>Batrachia</taxon>
        <taxon>Anura</taxon>
        <taxon>Pipoidea</taxon>
        <taxon>Pipidae</taxon>
        <taxon>Xenopodinae</taxon>
        <taxon>Xenopus</taxon>
        <taxon>Silurana</taxon>
    </lineage>
</organism>
<evidence type="ECO:0000250" key="1">
    <source>
        <dbReference type="UniProtKB" id="Q8TCD6"/>
    </source>
</evidence>
<evidence type="ECO:0000250" key="2">
    <source>
        <dbReference type="UniProtKB" id="Q8TCT1"/>
    </source>
</evidence>
<evidence type="ECO:0000250" key="3">
    <source>
        <dbReference type="UniProtKB" id="Q96GD0"/>
    </source>
</evidence>
<evidence type="ECO:0000305" key="4"/>
<name>PHOP2_XENTR</name>
<sequence length="238" mass="26785">MKTLLVFDFDHTIINDNSDTWIVQCVPGKKLPNGLQNSYEKGKWTEYMGRVFSYLGEQGIREEDMKRIMIAIPYTPGMTDLLHFIGQNKDSFDCIIISDSNTIFIDWILTHANVHNVFDKVFTNPAAFDSVGNLTVQNFHVHHCTTCPTNLCKKKVLEEFVAKQSSNSAHYSKIVYVGDGGNDLCPVTFLKKGDIAMPRAGYTLDKHIAKDVTLVDSTISVWSTGAEILSHLKLLLEH</sequence>
<protein>
    <recommendedName>
        <fullName>Probable phosphatase phospho2</fullName>
        <ecNumber evidence="1">3.1.3.-</ecNumber>
    </recommendedName>
</protein>
<dbReference type="EC" id="3.1.3.-" evidence="1"/>
<dbReference type="EMBL" id="BC080449">
    <property type="protein sequence ID" value="AAH80449.1"/>
    <property type="molecule type" value="mRNA"/>
</dbReference>
<dbReference type="RefSeq" id="NP_001007942.1">
    <property type="nucleotide sequence ID" value="NM_001007941.2"/>
</dbReference>
<dbReference type="RefSeq" id="XP_012825780.1">
    <property type="nucleotide sequence ID" value="XM_012970326.3"/>
</dbReference>
<dbReference type="RefSeq" id="XP_012825781.1">
    <property type="nucleotide sequence ID" value="XM_012970327.2"/>
</dbReference>
<dbReference type="SMR" id="Q66KD6"/>
<dbReference type="FunCoup" id="Q66KD6">
    <property type="interactions" value="1213"/>
</dbReference>
<dbReference type="STRING" id="8364.ENSXETP00000017681"/>
<dbReference type="PaxDb" id="8364-ENSXETP00000040976"/>
<dbReference type="DNASU" id="493318"/>
<dbReference type="GeneID" id="493318"/>
<dbReference type="KEGG" id="xtr:493318"/>
<dbReference type="AGR" id="Xenbase:XB-GENE-1002120"/>
<dbReference type="CTD" id="493911"/>
<dbReference type="Xenbase" id="XB-GENE-1002120">
    <property type="gene designation" value="phospho2"/>
</dbReference>
<dbReference type="eggNOG" id="KOG3120">
    <property type="taxonomic scope" value="Eukaryota"/>
</dbReference>
<dbReference type="HOGENOM" id="CLU_068983_0_1_1"/>
<dbReference type="InParanoid" id="Q66KD6"/>
<dbReference type="OMA" id="HNLADCF"/>
<dbReference type="OrthoDB" id="10267182at2759"/>
<dbReference type="PhylomeDB" id="Q66KD6"/>
<dbReference type="TreeFam" id="TF300112"/>
<dbReference type="Proteomes" id="UP000008143">
    <property type="component" value="Chromosome 9"/>
</dbReference>
<dbReference type="Bgee" id="ENSXETG00000018895">
    <property type="expression patterns" value="Expressed in egg cell and 17 other cell types or tissues"/>
</dbReference>
<dbReference type="GO" id="GO:0046872">
    <property type="term" value="F:metal ion binding"/>
    <property type="evidence" value="ECO:0007669"/>
    <property type="project" value="UniProtKB-KW"/>
</dbReference>
<dbReference type="GO" id="GO:0016791">
    <property type="term" value="F:phosphatase activity"/>
    <property type="evidence" value="ECO:0007669"/>
    <property type="project" value="InterPro"/>
</dbReference>
<dbReference type="CDD" id="cd16418">
    <property type="entry name" value="HAD_Pase"/>
    <property type="match status" value="1"/>
</dbReference>
<dbReference type="Gene3D" id="3.40.50.1000">
    <property type="entry name" value="HAD superfamily/HAD-like"/>
    <property type="match status" value="1"/>
</dbReference>
<dbReference type="InterPro" id="IPR036412">
    <property type="entry name" value="HAD-like_sf"/>
</dbReference>
<dbReference type="InterPro" id="IPR006384">
    <property type="entry name" value="HAD_hydro_PyrdxlP_Pase-like"/>
</dbReference>
<dbReference type="InterPro" id="IPR023214">
    <property type="entry name" value="HAD_sf"/>
</dbReference>
<dbReference type="InterPro" id="IPR016965">
    <property type="entry name" value="Pase_PHOSPHO-typ"/>
</dbReference>
<dbReference type="NCBIfam" id="TIGR01489">
    <property type="entry name" value="DKMTPPase-SF"/>
    <property type="match status" value="1"/>
</dbReference>
<dbReference type="NCBIfam" id="TIGR01488">
    <property type="entry name" value="HAD-SF-IB"/>
    <property type="match status" value="1"/>
</dbReference>
<dbReference type="PANTHER" id="PTHR20889">
    <property type="entry name" value="PHOSPHATASE, ORPHAN 1, 2"/>
    <property type="match status" value="1"/>
</dbReference>
<dbReference type="PANTHER" id="PTHR20889:SF1">
    <property type="entry name" value="PYRIDOXAL PHOSPHATE PHOSPHATASE PHOSPHO2"/>
    <property type="match status" value="1"/>
</dbReference>
<dbReference type="Pfam" id="PF06888">
    <property type="entry name" value="Put_Phosphatase"/>
    <property type="match status" value="1"/>
</dbReference>
<dbReference type="PIRSF" id="PIRSF031051">
    <property type="entry name" value="PyrdxlP_Pase_PHOSPHO2"/>
    <property type="match status" value="1"/>
</dbReference>
<dbReference type="SUPFAM" id="SSF56784">
    <property type="entry name" value="HAD-like"/>
    <property type="match status" value="1"/>
</dbReference>
<gene>
    <name type="primary">phospho2</name>
</gene>
<reference key="1">
    <citation type="submission" date="2004-08" db="EMBL/GenBank/DDBJ databases">
        <authorList>
            <consortium name="NIH - Xenopus Gene Collection (XGC) project"/>
        </authorList>
    </citation>
    <scope>NUCLEOTIDE SEQUENCE [LARGE SCALE MRNA]</scope>
    <source>
        <tissue>Embryo</tissue>
    </source>
</reference>
<feature type="chain" id="PRO_0000068836" description="Probable phosphatase phospho2">
    <location>
        <begin position="1"/>
        <end position="238"/>
    </location>
</feature>
<feature type="active site" description="Nucleophile" evidence="2">
    <location>
        <position position="8"/>
    </location>
</feature>
<feature type="active site" description="Proton donor" evidence="3">
    <location>
        <position position="10"/>
    </location>
</feature>
<feature type="binding site" evidence="3">
    <location>
        <position position="8"/>
    </location>
    <ligand>
        <name>Mg(2+)</name>
        <dbReference type="ChEBI" id="CHEBI:18420"/>
    </ligand>
</feature>
<feature type="binding site" evidence="3">
    <location>
        <position position="10"/>
    </location>
    <ligand>
        <name>Mg(2+)</name>
        <dbReference type="ChEBI" id="CHEBI:18420"/>
    </ligand>
</feature>
<feature type="binding site" evidence="2">
    <location>
        <position position="19"/>
    </location>
    <ligand>
        <name>substrate</name>
    </ligand>
</feature>
<feature type="binding site" evidence="2">
    <location>
        <position position="99"/>
    </location>
    <ligand>
        <name>substrate</name>
    </ligand>
</feature>
<feature type="binding site" evidence="3">
    <location>
        <position position="179"/>
    </location>
    <ligand>
        <name>Mg(2+)</name>
        <dbReference type="ChEBI" id="CHEBI:18420"/>
    </ligand>
</feature>
<accession>Q66KD6</accession>
<comment type="function">
    <text evidence="1">Probable phosphatase.</text>
</comment>
<comment type="cofactor">
    <cofactor evidence="2">
        <name>Mg(2+)</name>
        <dbReference type="ChEBI" id="CHEBI:18420"/>
    </cofactor>
</comment>
<comment type="similarity">
    <text evidence="4">Belongs to the HAD-like hydrolase superfamily. PHOSPHO family.</text>
</comment>